<feature type="chain" id="PRO_0000160174" description="Glucosamine-6-phosphate deaminase">
    <location>
        <begin position="1"/>
        <end position="261"/>
    </location>
</feature>
<feature type="active site" description="Proton acceptor; for enolization step" evidence="1">
    <location>
        <position position="67"/>
    </location>
</feature>
<feature type="active site" description="For ring-opening step" evidence="1">
    <location>
        <position position="136"/>
    </location>
</feature>
<feature type="active site" description="Proton acceptor; for ring-opening step" evidence="1">
    <location>
        <position position="138"/>
    </location>
</feature>
<feature type="active site" description="For ring-opening step" evidence="1">
    <location>
        <position position="143"/>
    </location>
</feature>
<gene>
    <name evidence="1" type="primary">nagB</name>
    <name type="synonym">gamA</name>
    <name type="ordered locus">SAV_3018</name>
</gene>
<organism>
    <name type="scientific">Streptomyces avermitilis (strain ATCC 31267 / DSM 46492 / JCM 5070 / NBRC 14893 / NCIMB 12804 / NRRL 8165 / MA-4680)</name>
    <dbReference type="NCBI Taxonomy" id="227882"/>
    <lineage>
        <taxon>Bacteria</taxon>
        <taxon>Bacillati</taxon>
        <taxon>Actinomycetota</taxon>
        <taxon>Actinomycetes</taxon>
        <taxon>Kitasatosporales</taxon>
        <taxon>Streptomycetaceae</taxon>
        <taxon>Streptomyces</taxon>
    </lineage>
</organism>
<accession>P59689</accession>
<comment type="function">
    <text evidence="1">Catalyzes the reversible isomerization-deamination of glucosamine 6-phosphate (GlcN6P) to form fructose 6-phosphate (Fru6P) and ammonium ion.</text>
</comment>
<comment type="catalytic activity">
    <reaction evidence="1">
        <text>alpha-D-glucosamine 6-phosphate + H2O = beta-D-fructose 6-phosphate + NH4(+)</text>
        <dbReference type="Rhea" id="RHEA:12172"/>
        <dbReference type="ChEBI" id="CHEBI:15377"/>
        <dbReference type="ChEBI" id="CHEBI:28938"/>
        <dbReference type="ChEBI" id="CHEBI:57634"/>
        <dbReference type="ChEBI" id="CHEBI:75989"/>
        <dbReference type="EC" id="3.5.99.6"/>
    </reaction>
</comment>
<comment type="pathway">
    <text evidence="1">Amino-sugar metabolism; N-acetylneuraminate degradation; D-fructose 6-phosphate from N-acetylneuraminate: step 5/5.</text>
</comment>
<comment type="similarity">
    <text evidence="1">Belongs to the glucosamine/galactosamine-6-phosphate isomerase family. NagB subfamily.</text>
</comment>
<keyword id="KW-0119">Carbohydrate metabolism</keyword>
<keyword id="KW-0378">Hydrolase</keyword>
<keyword id="KW-1185">Reference proteome</keyword>
<protein>
    <recommendedName>
        <fullName evidence="1">Glucosamine-6-phosphate deaminase</fullName>
        <ecNumber evidence="1">3.5.99.6</ecNumber>
    </recommendedName>
    <alternativeName>
        <fullName evidence="1">GlcN6P deaminase</fullName>
        <shortName evidence="1">GNPDA</shortName>
    </alternativeName>
    <alternativeName>
        <fullName evidence="1">Glucosamine-6-phosphate isomerase</fullName>
    </alternativeName>
</protein>
<sequence length="261" mass="27334">MEVVIVPDARAGGELIAEAMAQLLGRKPEALLGVATGSTPLPIYEALAAQVKSGAVDASRARIAQLDEYVGLPAEHPESYRSVLRREVLEPLGLGMDAFMGPDGTAEDVQGACEAYDKALAAAGGVDLQLLGIGTDGHIGFNEPCSSLASRTRIKTLTEQTRVDNARFFDGDIEQVPHHVITQGIGTILEARHLVLLATGEGKADAVAATVEGPVAAVCPASALQLHPHATVVVDDAAASKLKLADYFRHTYAGKPDWQGI</sequence>
<proteinExistence type="inferred from homology"/>
<name>NAGB_STRAW</name>
<reference key="1">
    <citation type="journal article" date="2001" name="Proc. Natl. Acad. Sci. U.S.A.">
        <title>Genome sequence of an industrial microorganism Streptomyces avermitilis: deducing the ability of producing secondary metabolites.</title>
        <authorList>
            <person name="Omura S."/>
            <person name="Ikeda H."/>
            <person name="Ishikawa J."/>
            <person name="Hanamoto A."/>
            <person name="Takahashi C."/>
            <person name="Shinose M."/>
            <person name="Takahashi Y."/>
            <person name="Horikawa H."/>
            <person name="Nakazawa H."/>
            <person name="Osonoe T."/>
            <person name="Kikuchi H."/>
            <person name="Shiba T."/>
            <person name="Sakaki Y."/>
            <person name="Hattori M."/>
        </authorList>
    </citation>
    <scope>NUCLEOTIDE SEQUENCE [LARGE SCALE GENOMIC DNA]</scope>
    <source>
        <strain>ATCC 31267 / DSM 46492 / JCM 5070 / NBRC 14893 / NCIMB 12804 / NRRL 8165 / MA-4680</strain>
    </source>
</reference>
<reference key="2">
    <citation type="journal article" date="2003" name="Nat. Biotechnol.">
        <title>Complete genome sequence and comparative analysis of the industrial microorganism Streptomyces avermitilis.</title>
        <authorList>
            <person name="Ikeda H."/>
            <person name="Ishikawa J."/>
            <person name="Hanamoto A."/>
            <person name="Shinose M."/>
            <person name="Kikuchi H."/>
            <person name="Shiba T."/>
            <person name="Sakaki Y."/>
            <person name="Hattori M."/>
            <person name="Omura S."/>
        </authorList>
    </citation>
    <scope>NUCLEOTIDE SEQUENCE [LARGE SCALE GENOMIC DNA]</scope>
    <source>
        <strain>ATCC 31267 / DSM 46492 / JCM 5070 / NBRC 14893 / NCIMB 12804 / NRRL 8165 / MA-4680</strain>
    </source>
</reference>
<evidence type="ECO:0000255" key="1">
    <source>
        <dbReference type="HAMAP-Rule" id="MF_01241"/>
    </source>
</evidence>
<dbReference type="EC" id="3.5.99.6" evidence="1"/>
<dbReference type="EMBL" id="BA000030">
    <property type="protein sequence ID" value="BAC70729.1"/>
    <property type="molecule type" value="Genomic_DNA"/>
</dbReference>
<dbReference type="RefSeq" id="WP_010984448.1">
    <property type="nucleotide sequence ID" value="NZ_JZJK01000090.1"/>
</dbReference>
<dbReference type="SMR" id="P59689"/>
<dbReference type="GeneID" id="41540099"/>
<dbReference type="KEGG" id="sma:SAVERM_3018"/>
<dbReference type="eggNOG" id="COG0363">
    <property type="taxonomic scope" value="Bacteria"/>
</dbReference>
<dbReference type="HOGENOM" id="CLU_049611_0_1_11"/>
<dbReference type="OrthoDB" id="9791139at2"/>
<dbReference type="UniPathway" id="UPA00629">
    <property type="reaction ID" value="UER00684"/>
</dbReference>
<dbReference type="Proteomes" id="UP000000428">
    <property type="component" value="Chromosome"/>
</dbReference>
<dbReference type="GO" id="GO:0005737">
    <property type="term" value="C:cytoplasm"/>
    <property type="evidence" value="ECO:0007669"/>
    <property type="project" value="TreeGrafter"/>
</dbReference>
<dbReference type="GO" id="GO:0004342">
    <property type="term" value="F:glucosamine-6-phosphate deaminase activity"/>
    <property type="evidence" value="ECO:0007669"/>
    <property type="project" value="UniProtKB-UniRule"/>
</dbReference>
<dbReference type="GO" id="GO:0042802">
    <property type="term" value="F:identical protein binding"/>
    <property type="evidence" value="ECO:0007669"/>
    <property type="project" value="TreeGrafter"/>
</dbReference>
<dbReference type="GO" id="GO:0005975">
    <property type="term" value="P:carbohydrate metabolic process"/>
    <property type="evidence" value="ECO:0007669"/>
    <property type="project" value="InterPro"/>
</dbReference>
<dbReference type="GO" id="GO:0006043">
    <property type="term" value="P:glucosamine catabolic process"/>
    <property type="evidence" value="ECO:0007669"/>
    <property type="project" value="TreeGrafter"/>
</dbReference>
<dbReference type="GO" id="GO:0006046">
    <property type="term" value="P:N-acetylglucosamine catabolic process"/>
    <property type="evidence" value="ECO:0007669"/>
    <property type="project" value="TreeGrafter"/>
</dbReference>
<dbReference type="GO" id="GO:0019262">
    <property type="term" value="P:N-acetylneuraminate catabolic process"/>
    <property type="evidence" value="ECO:0007669"/>
    <property type="project" value="UniProtKB-UniRule"/>
</dbReference>
<dbReference type="CDD" id="cd01399">
    <property type="entry name" value="GlcN6P_deaminase"/>
    <property type="match status" value="1"/>
</dbReference>
<dbReference type="FunFam" id="3.40.50.1360:FF:000003">
    <property type="entry name" value="Glucosamine-6-phosphate deaminase"/>
    <property type="match status" value="1"/>
</dbReference>
<dbReference type="Gene3D" id="3.40.50.1360">
    <property type="match status" value="1"/>
</dbReference>
<dbReference type="HAMAP" id="MF_01241">
    <property type="entry name" value="GlcN6P_deamin"/>
    <property type="match status" value="1"/>
</dbReference>
<dbReference type="InterPro" id="IPR006148">
    <property type="entry name" value="Glc/Gal-6P_isomerase"/>
</dbReference>
<dbReference type="InterPro" id="IPR004547">
    <property type="entry name" value="Glucosamine6P_isomerase"/>
</dbReference>
<dbReference type="InterPro" id="IPR018321">
    <property type="entry name" value="Glucosamine6P_isomerase_CS"/>
</dbReference>
<dbReference type="InterPro" id="IPR037171">
    <property type="entry name" value="NagB/RpiA_transferase-like"/>
</dbReference>
<dbReference type="NCBIfam" id="TIGR00502">
    <property type="entry name" value="nagB"/>
    <property type="match status" value="1"/>
</dbReference>
<dbReference type="NCBIfam" id="NF001684">
    <property type="entry name" value="PRK00443.1-4"/>
    <property type="match status" value="1"/>
</dbReference>
<dbReference type="PANTHER" id="PTHR11280">
    <property type="entry name" value="GLUCOSAMINE-6-PHOSPHATE ISOMERASE"/>
    <property type="match status" value="1"/>
</dbReference>
<dbReference type="PANTHER" id="PTHR11280:SF5">
    <property type="entry name" value="GLUCOSAMINE-6-PHOSPHATE ISOMERASE"/>
    <property type="match status" value="1"/>
</dbReference>
<dbReference type="Pfam" id="PF01182">
    <property type="entry name" value="Glucosamine_iso"/>
    <property type="match status" value="1"/>
</dbReference>
<dbReference type="SUPFAM" id="SSF100950">
    <property type="entry name" value="NagB/RpiA/CoA transferase-like"/>
    <property type="match status" value="1"/>
</dbReference>
<dbReference type="PROSITE" id="PS01161">
    <property type="entry name" value="GLC_GALNAC_ISOMERASE"/>
    <property type="match status" value="1"/>
</dbReference>